<sequence length="749" mass="83116">MTIKPAVRISDGNLIIKNRTILTGVPDNVITTSASEAGPVEGVFVGAVFNKEESKHIVPIGTLRNSRFMSCFRFKLWWMAQRMGEMGRDIPYETQFLLVESNDGSHLESDGANGVECNQKVYTVFLPLIEGSFRSCLQGNVNDEVELCLESGDVDTKRSSFTHSLYIHAGTDPFQTITDAIRTVKLHLNSFRQRHEKKLPGIVDYFGWCTWDAFYQEVTQEGVEAGLKSLAAGGTPPKFVIIDDGWQSVERDATVEAGDEKKESPIFRLTGIKENEKFKKKDDPNVGIKNIVKIAKEKHGLKYVYVWHAITGYWGGVRPGEEYGSVMKYPNMSKGVVENDPTWKTDVMTLQGLGLVSPKKVYKFYNELHSYLADAGVDGVKVDVQCVLETLGGGLGGRVELTRQFHQALDSSVAKNFPDNGCIACMSHNTDALYCSKQAAVIRASDDFYPRDPVSHTIHIASVAYNSVFLGEFMQPDWDMFHSVHPAAEYHASARAISGGPLYVSDSPGKHNFELLRKLVLPDGSILRARLPGRPTRDCLFADPARDGVSLLKIWNMNKYTGVLGVYNCQGAAWSSTERKNIFHQTKTDSLTGSIRGRDVHSISEASTDPTTWNGDCAVYSQSRGELIVMPYNVSLPVSLKIREHEIFTVSPISHLVDGVSFAPIGLVNMYNSGGAIEGLRYEAEKMKVVMEVKGCGKFGSYSSVKPKRCVVESNEIAFEYDSSSGLVTFELDKMPIENKRFHLIQVEL</sequence>
<gene>
    <name type="primary">RFS6</name>
    <name type="synonym">DIN10</name>
    <name type="synonym">RS6</name>
    <name type="ordered locus">At5g20250</name>
    <name type="ORF">F5O24.140</name>
</gene>
<feature type="chain" id="PRO_0000389259" description="Probable galactinol--sucrose galactosyltransferase 6">
    <location>
        <begin position="1"/>
        <end position="749"/>
    </location>
</feature>
<feature type="sequence conflict" description="In Ref. 5; BAH19983." evidence="4" ref="5">
    <original>K</original>
    <variation>R</variation>
    <location>
        <position position="302"/>
    </location>
</feature>
<feature type="sequence conflict" description="In Ref. 4; BAD93984." evidence="4" ref="4">
    <original>M</original>
    <variation>V</variation>
    <location>
        <position position="670"/>
    </location>
</feature>
<feature type="strand" evidence="7">
    <location>
        <begin position="7"/>
        <end position="10"/>
    </location>
</feature>
<feature type="strand" evidence="7">
    <location>
        <begin position="13"/>
        <end position="16"/>
    </location>
</feature>
<feature type="strand" evidence="7">
    <location>
        <begin position="19"/>
        <end position="23"/>
    </location>
</feature>
<feature type="strand" evidence="7">
    <location>
        <begin position="29"/>
        <end position="32"/>
    </location>
</feature>
<feature type="strand" evidence="6">
    <location>
        <begin position="35"/>
        <end position="37"/>
    </location>
</feature>
<feature type="strand" evidence="7">
    <location>
        <begin position="41"/>
        <end position="62"/>
    </location>
</feature>
<feature type="strand" evidence="7">
    <location>
        <begin position="68"/>
        <end position="75"/>
    </location>
</feature>
<feature type="strand" evidence="7">
    <location>
        <begin position="78"/>
        <end position="86"/>
    </location>
</feature>
<feature type="helix" evidence="7">
    <location>
        <begin position="87"/>
        <end position="89"/>
    </location>
</feature>
<feature type="strand" evidence="7">
    <location>
        <begin position="94"/>
        <end position="101"/>
    </location>
</feature>
<feature type="strand" evidence="7">
    <location>
        <begin position="121"/>
        <end position="127"/>
    </location>
</feature>
<feature type="strand" evidence="7">
    <location>
        <begin position="133"/>
        <end position="139"/>
    </location>
</feature>
<feature type="strand" evidence="7">
    <location>
        <begin position="143"/>
        <end position="150"/>
    </location>
</feature>
<feature type="strand" evidence="7">
    <location>
        <begin position="158"/>
        <end position="172"/>
    </location>
</feature>
<feature type="helix" evidence="7">
    <location>
        <begin position="173"/>
        <end position="188"/>
    </location>
</feature>
<feature type="helix" evidence="7">
    <location>
        <begin position="194"/>
        <end position="196"/>
    </location>
</feature>
<feature type="helix" evidence="7">
    <location>
        <begin position="201"/>
        <end position="204"/>
    </location>
</feature>
<feature type="strand" evidence="7">
    <location>
        <begin position="205"/>
        <end position="210"/>
    </location>
</feature>
<feature type="helix" evidence="7">
    <location>
        <begin position="211"/>
        <end position="214"/>
    </location>
</feature>
<feature type="helix" evidence="7">
    <location>
        <begin position="215"/>
        <end position="217"/>
    </location>
</feature>
<feature type="helix" evidence="7">
    <location>
        <begin position="220"/>
        <end position="232"/>
    </location>
</feature>
<feature type="strand" evidence="7">
    <location>
        <begin position="238"/>
        <end position="242"/>
    </location>
</feature>
<feature type="strand" evidence="7">
    <location>
        <begin position="247"/>
        <end position="250"/>
    </location>
</feature>
<feature type="strand" evidence="7">
    <location>
        <begin position="268"/>
        <end position="274"/>
    </location>
</feature>
<feature type="helix" evidence="7">
    <location>
        <begin position="276"/>
        <end position="278"/>
    </location>
</feature>
<feature type="helix" evidence="7">
    <location>
        <begin position="289"/>
        <end position="297"/>
    </location>
</feature>
<feature type="strand" evidence="7">
    <location>
        <begin position="302"/>
        <end position="309"/>
    </location>
</feature>
<feature type="turn" evidence="7">
    <location>
        <begin position="321"/>
        <end position="324"/>
    </location>
</feature>
<feature type="strand" evidence="7">
    <location>
        <begin position="325"/>
        <end position="328"/>
    </location>
</feature>
<feature type="helix" evidence="7">
    <location>
        <begin position="334"/>
        <end position="339"/>
    </location>
</feature>
<feature type="helix" evidence="7">
    <location>
        <begin position="341"/>
        <end position="345"/>
    </location>
</feature>
<feature type="helix" evidence="7">
    <location>
        <begin position="347"/>
        <end position="351"/>
    </location>
</feature>
<feature type="strand" evidence="7">
    <location>
        <begin position="353"/>
        <end position="355"/>
    </location>
</feature>
<feature type="turn" evidence="7">
    <location>
        <begin position="358"/>
        <end position="360"/>
    </location>
</feature>
<feature type="helix" evidence="7">
    <location>
        <begin position="361"/>
        <end position="374"/>
    </location>
</feature>
<feature type="strand" evidence="7">
    <location>
        <begin position="379"/>
        <end position="383"/>
    </location>
</feature>
<feature type="helix" evidence="7">
    <location>
        <begin position="385"/>
        <end position="390"/>
    </location>
</feature>
<feature type="helix" evidence="7">
    <location>
        <begin position="393"/>
        <end position="395"/>
    </location>
</feature>
<feature type="helix" evidence="7">
    <location>
        <begin position="397"/>
        <end position="416"/>
    </location>
</feature>
<feature type="turn" evidence="7">
    <location>
        <begin position="418"/>
        <end position="420"/>
    </location>
</feature>
<feature type="strand" evidence="7">
    <location>
        <begin position="422"/>
        <end position="424"/>
    </location>
</feature>
<feature type="helix" evidence="7">
    <location>
        <begin position="430"/>
        <end position="433"/>
    </location>
</feature>
<feature type="strand" evidence="7">
    <location>
        <begin position="441"/>
        <end position="443"/>
    </location>
</feature>
<feature type="helix" evidence="7">
    <location>
        <begin position="455"/>
        <end position="470"/>
    </location>
</feature>
<feature type="turn" evidence="7">
    <location>
        <begin position="471"/>
        <end position="473"/>
    </location>
</feature>
<feature type="strand" evidence="7">
    <location>
        <begin position="474"/>
        <end position="477"/>
    </location>
</feature>
<feature type="strand" evidence="7">
    <location>
        <begin position="483"/>
        <end position="485"/>
    </location>
</feature>
<feature type="helix" evidence="7">
    <location>
        <begin position="488"/>
        <end position="496"/>
    </location>
</feature>
<feature type="strand" evidence="7">
    <location>
        <begin position="498"/>
        <end position="500"/>
    </location>
</feature>
<feature type="strand" evidence="7">
    <location>
        <begin position="502"/>
        <end position="504"/>
    </location>
</feature>
<feature type="helix" evidence="7">
    <location>
        <begin position="513"/>
        <end position="516"/>
    </location>
</feature>
<feature type="turn" evidence="7">
    <location>
        <begin position="517"/>
        <end position="519"/>
    </location>
</feature>
<feature type="strand" evidence="7">
    <location>
        <begin position="524"/>
        <end position="526"/>
    </location>
</feature>
<feature type="helix" evidence="7">
    <location>
        <begin position="537"/>
        <end position="539"/>
    </location>
</feature>
<feature type="strand" evidence="5">
    <location>
        <begin position="540"/>
        <end position="542"/>
    </location>
</feature>
<feature type="turn" evidence="7">
    <location>
        <begin position="544"/>
        <end position="546"/>
    </location>
</feature>
<feature type="strand" evidence="7">
    <location>
        <begin position="547"/>
        <end position="549"/>
    </location>
</feature>
<feature type="strand" evidence="7">
    <location>
        <begin position="552"/>
        <end position="557"/>
    </location>
</feature>
<feature type="strand" evidence="7">
    <location>
        <begin position="562"/>
        <end position="567"/>
    </location>
</feature>
<feature type="strand" evidence="7">
    <location>
        <begin position="572"/>
        <end position="574"/>
    </location>
</feature>
<feature type="turn" evidence="7">
    <location>
        <begin position="576"/>
        <end position="578"/>
    </location>
</feature>
<feature type="strand" evidence="7">
    <location>
        <begin position="579"/>
        <end position="583"/>
    </location>
</feature>
<feature type="strand" evidence="7">
    <location>
        <begin position="589"/>
        <end position="595"/>
    </location>
</feature>
<feature type="helix" evidence="7">
    <location>
        <begin position="597"/>
        <end position="599"/>
    </location>
</feature>
<feature type="helix" evidence="7">
    <location>
        <begin position="603"/>
        <end position="606"/>
    </location>
</feature>
<feature type="turn" evidence="7">
    <location>
        <begin position="610"/>
        <end position="612"/>
    </location>
</feature>
<feature type="strand" evidence="7">
    <location>
        <begin position="617"/>
        <end position="621"/>
    </location>
</feature>
<feature type="turn" evidence="7">
    <location>
        <begin position="622"/>
        <end position="625"/>
    </location>
</feature>
<feature type="strand" evidence="7">
    <location>
        <begin position="626"/>
        <end position="630"/>
    </location>
</feature>
<feature type="strand" evidence="7">
    <location>
        <begin position="636"/>
        <end position="641"/>
    </location>
</feature>
<feature type="strand" evidence="7">
    <location>
        <begin position="645"/>
        <end position="652"/>
    </location>
</feature>
<feature type="strand" evidence="7">
    <location>
        <begin position="654"/>
        <end position="657"/>
    </location>
</feature>
<feature type="strand" evidence="7">
    <location>
        <begin position="660"/>
        <end position="667"/>
    </location>
</feature>
<feature type="helix" evidence="7">
    <location>
        <begin position="673"/>
        <end position="676"/>
    </location>
</feature>
<feature type="strand" evidence="7">
    <location>
        <begin position="677"/>
        <end position="683"/>
    </location>
</feature>
<feature type="helix" evidence="7">
    <location>
        <begin position="684"/>
        <end position="686"/>
    </location>
</feature>
<feature type="strand" evidence="7">
    <location>
        <begin position="688"/>
        <end position="693"/>
    </location>
</feature>
<feature type="strand" evidence="7">
    <location>
        <begin position="697"/>
        <end position="705"/>
    </location>
</feature>
<feature type="strand" evidence="7">
    <location>
        <begin position="708"/>
        <end position="712"/>
    </location>
</feature>
<feature type="strand" evidence="7">
    <location>
        <begin position="715"/>
        <end position="717"/>
    </location>
</feature>
<feature type="strand" evidence="7">
    <location>
        <begin position="720"/>
        <end position="722"/>
    </location>
</feature>
<feature type="turn" evidence="7">
    <location>
        <begin position="723"/>
        <end position="726"/>
    </location>
</feature>
<feature type="strand" evidence="7">
    <location>
        <begin position="727"/>
        <end position="732"/>
    </location>
</feature>
<feature type="strand" evidence="5">
    <location>
        <begin position="737"/>
        <end position="739"/>
    </location>
</feature>
<feature type="strand" evidence="7">
    <location>
        <begin position="742"/>
        <end position="748"/>
    </location>
</feature>
<protein>
    <recommendedName>
        <fullName>Probable galactinol--sucrose galactosyltransferase 6</fullName>
        <ecNumber>2.4.1.82</ecNumber>
    </recommendedName>
    <alternativeName>
        <fullName>Protein DARK INDUCIBLE 10</fullName>
    </alternativeName>
    <alternativeName>
        <fullName>Raffinose synthase 6</fullName>
    </alternativeName>
</protein>
<keyword id="KW-0002">3D-structure</keyword>
<keyword id="KW-0025">Alternative splicing</keyword>
<keyword id="KW-0119">Carbohydrate metabolism</keyword>
<keyword id="KW-0328">Glycosyltransferase</keyword>
<keyword id="KW-1185">Reference proteome</keyword>
<keyword id="KW-0808">Transferase</keyword>
<comment type="function">
    <text evidence="1">Transglycosidase operating by a ping-pong reaction mechanism. Involved in the synthesis of raffinose, a major soluble carbohydrate in seeds, roots and tubers (By similarity).</text>
</comment>
<comment type="catalytic activity">
    <reaction>
        <text>alpha-D-galactosyl-(1-&gt;3)-1D-myo-inositol + sucrose = raffinose + myo-inositol</text>
        <dbReference type="Rhea" id="RHEA:20161"/>
        <dbReference type="ChEBI" id="CHEBI:16634"/>
        <dbReference type="ChEBI" id="CHEBI:17268"/>
        <dbReference type="ChEBI" id="CHEBI:17505"/>
        <dbReference type="ChEBI" id="CHEBI:17992"/>
        <dbReference type="EC" id="2.4.1.82"/>
    </reaction>
</comment>
<comment type="alternative products">
    <event type="alternative splicing"/>
    <isoform>
        <id>Q8RX87-1</id>
        <name>1</name>
        <sequence type="displayed"/>
    </isoform>
    <text>A number of isoforms are produced. According to EST sequences.</text>
</comment>
<comment type="developmental stage">
    <text evidence="2">Expressed in 24 hours imbibed seeds and during leaf senescence.</text>
</comment>
<comment type="induction">
    <text evidence="2 3">By oxidative stress and by dark treatment. Down-regulated by sucrose, but not by osmotic treatment.</text>
</comment>
<comment type="similarity">
    <text evidence="4">Belongs to the glycosyl hydrolases 36 family.</text>
</comment>
<comment type="sequence caution" evidence="4">
    <conflict type="erroneous initiation">
        <sequence resource="EMBL-CDS" id="AAL90901"/>
    </conflict>
    <text>Extended N-terminus.</text>
</comment>
<comment type="sequence caution" evidence="4">
    <conflict type="erroneous initiation">
        <sequence resource="EMBL-CDS" id="AAN18198"/>
    </conflict>
    <text>Extended N-terminus.</text>
</comment>
<comment type="sequence caution" evidence="4">
    <conflict type="erroneous initiation">
        <sequence resource="EMBL-CDS" id="BAE99252"/>
    </conflict>
    <text>Extended N-terminus.</text>
</comment>
<name>RFS6_ARATH</name>
<proteinExistence type="evidence at protein level"/>
<evidence type="ECO:0000250" key="1"/>
<evidence type="ECO:0000269" key="2">
    <source>
    </source>
</evidence>
<evidence type="ECO:0000269" key="3">
    <source>
    </source>
</evidence>
<evidence type="ECO:0000305" key="4"/>
<evidence type="ECO:0007829" key="5">
    <source>
        <dbReference type="PDB" id="7EXF"/>
    </source>
</evidence>
<evidence type="ECO:0007829" key="6">
    <source>
        <dbReference type="PDB" id="7EXG"/>
    </source>
</evidence>
<evidence type="ECO:0007829" key="7">
    <source>
        <dbReference type="PDB" id="7EXR"/>
    </source>
</evidence>
<organism>
    <name type="scientific">Arabidopsis thaliana</name>
    <name type="common">Mouse-ear cress</name>
    <dbReference type="NCBI Taxonomy" id="3702"/>
    <lineage>
        <taxon>Eukaryota</taxon>
        <taxon>Viridiplantae</taxon>
        <taxon>Streptophyta</taxon>
        <taxon>Embryophyta</taxon>
        <taxon>Tracheophyta</taxon>
        <taxon>Spermatophyta</taxon>
        <taxon>Magnoliopsida</taxon>
        <taxon>eudicotyledons</taxon>
        <taxon>Gunneridae</taxon>
        <taxon>Pentapetalae</taxon>
        <taxon>rosids</taxon>
        <taxon>malvids</taxon>
        <taxon>Brassicales</taxon>
        <taxon>Brassicaceae</taxon>
        <taxon>Camelineae</taxon>
        <taxon>Arabidopsis</taxon>
    </lineage>
</organism>
<reference key="1">
    <citation type="journal article" date="2000" name="Nature">
        <title>Sequence and analysis of chromosome 5 of the plant Arabidopsis thaliana.</title>
        <authorList>
            <person name="Tabata S."/>
            <person name="Kaneko T."/>
            <person name="Nakamura Y."/>
            <person name="Kotani H."/>
            <person name="Kato T."/>
            <person name="Asamizu E."/>
            <person name="Miyajima N."/>
            <person name="Sasamoto S."/>
            <person name="Kimura T."/>
            <person name="Hosouchi T."/>
            <person name="Kawashima K."/>
            <person name="Kohara M."/>
            <person name="Matsumoto M."/>
            <person name="Matsuno A."/>
            <person name="Muraki A."/>
            <person name="Nakayama S."/>
            <person name="Nakazaki N."/>
            <person name="Naruo K."/>
            <person name="Okumura S."/>
            <person name="Shinpo S."/>
            <person name="Takeuchi C."/>
            <person name="Wada T."/>
            <person name="Watanabe A."/>
            <person name="Yamada M."/>
            <person name="Yasuda M."/>
            <person name="Sato S."/>
            <person name="de la Bastide M."/>
            <person name="Huang E."/>
            <person name="Spiegel L."/>
            <person name="Gnoj L."/>
            <person name="O'Shaughnessy A."/>
            <person name="Preston R."/>
            <person name="Habermann K."/>
            <person name="Murray J."/>
            <person name="Johnson D."/>
            <person name="Rohlfing T."/>
            <person name="Nelson J."/>
            <person name="Stoneking T."/>
            <person name="Pepin K."/>
            <person name="Spieth J."/>
            <person name="Sekhon M."/>
            <person name="Armstrong J."/>
            <person name="Becker M."/>
            <person name="Belter E."/>
            <person name="Cordum H."/>
            <person name="Cordes M."/>
            <person name="Courtney L."/>
            <person name="Courtney W."/>
            <person name="Dante M."/>
            <person name="Du H."/>
            <person name="Edwards J."/>
            <person name="Fryman J."/>
            <person name="Haakensen B."/>
            <person name="Lamar E."/>
            <person name="Latreille P."/>
            <person name="Leonard S."/>
            <person name="Meyer R."/>
            <person name="Mulvaney E."/>
            <person name="Ozersky P."/>
            <person name="Riley A."/>
            <person name="Strowmatt C."/>
            <person name="Wagner-McPherson C."/>
            <person name="Wollam A."/>
            <person name="Yoakum M."/>
            <person name="Bell M."/>
            <person name="Dedhia N."/>
            <person name="Parnell L."/>
            <person name="Shah R."/>
            <person name="Rodriguez M."/>
            <person name="Hoon See L."/>
            <person name="Vil D."/>
            <person name="Baker J."/>
            <person name="Kirchoff K."/>
            <person name="Toth K."/>
            <person name="King L."/>
            <person name="Bahret A."/>
            <person name="Miller B."/>
            <person name="Marra M.A."/>
            <person name="Martienssen R."/>
            <person name="McCombie W.R."/>
            <person name="Wilson R.K."/>
            <person name="Murphy G."/>
            <person name="Bancroft I."/>
            <person name="Volckaert G."/>
            <person name="Wambutt R."/>
            <person name="Duesterhoeft A."/>
            <person name="Stiekema W."/>
            <person name="Pohl T."/>
            <person name="Entian K.-D."/>
            <person name="Terryn N."/>
            <person name="Hartley N."/>
            <person name="Bent E."/>
            <person name="Johnson S."/>
            <person name="Langham S.-A."/>
            <person name="McCullagh B."/>
            <person name="Robben J."/>
            <person name="Grymonprez B."/>
            <person name="Zimmermann W."/>
            <person name="Ramsperger U."/>
            <person name="Wedler H."/>
            <person name="Balke K."/>
            <person name="Wedler E."/>
            <person name="Peters S."/>
            <person name="van Staveren M."/>
            <person name="Dirkse W."/>
            <person name="Mooijman P."/>
            <person name="Klein Lankhorst R."/>
            <person name="Weitzenegger T."/>
            <person name="Bothe G."/>
            <person name="Rose M."/>
            <person name="Hauf J."/>
            <person name="Berneiser S."/>
            <person name="Hempel S."/>
            <person name="Feldpausch M."/>
            <person name="Lamberth S."/>
            <person name="Villarroel R."/>
            <person name="Gielen J."/>
            <person name="Ardiles W."/>
            <person name="Bents O."/>
            <person name="Lemcke K."/>
            <person name="Kolesov G."/>
            <person name="Mayer K.F.X."/>
            <person name="Rudd S."/>
            <person name="Schoof H."/>
            <person name="Schueller C."/>
            <person name="Zaccaria P."/>
            <person name="Mewes H.-W."/>
            <person name="Bevan M."/>
            <person name="Fransz P.F."/>
        </authorList>
    </citation>
    <scope>NUCLEOTIDE SEQUENCE [LARGE SCALE GENOMIC DNA]</scope>
    <source>
        <strain>cv. Columbia</strain>
    </source>
</reference>
<reference key="2">
    <citation type="journal article" date="2017" name="Plant J.">
        <title>Araport11: a complete reannotation of the Arabidopsis thaliana reference genome.</title>
        <authorList>
            <person name="Cheng C.Y."/>
            <person name="Krishnakumar V."/>
            <person name="Chan A.P."/>
            <person name="Thibaud-Nissen F."/>
            <person name="Schobel S."/>
            <person name="Town C.D."/>
        </authorList>
    </citation>
    <scope>GENOME REANNOTATION</scope>
    <source>
        <strain>cv. Columbia</strain>
    </source>
</reference>
<reference key="3">
    <citation type="journal article" date="2003" name="Science">
        <title>Empirical analysis of transcriptional activity in the Arabidopsis genome.</title>
        <authorList>
            <person name="Yamada K."/>
            <person name="Lim J."/>
            <person name="Dale J.M."/>
            <person name="Chen H."/>
            <person name="Shinn P."/>
            <person name="Palm C.J."/>
            <person name="Southwick A.M."/>
            <person name="Wu H.C."/>
            <person name="Kim C.J."/>
            <person name="Nguyen M."/>
            <person name="Pham P.K."/>
            <person name="Cheuk R.F."/>
            <person name="Karlin-Newmann G."/>
            <person name="Liu S.X."/>
            <person name="Lam B."/>
            <person name="Sakano H."/>
            <person name="Wu T."/>
            <person name="Yu G."/>
            <person name="Miranda M."/>
            <person name="Quach H.L."/>
            <person name="Tripp M."/>
            <person name="Chang C.H."/>
            <person name="Lee J.M."/>
            <person name="Toriumi M.J."/>
            <person name="Chan M.M."/>
            <person name="Tang C.C."/>
            <person name="Onodera C.S."/>
            <person name="Deng J.M."/>
            <person name="Akiyama K."/>
            <person name="Ansari Y."/>
            <person name="Arakawa T."/>
            <person name="Banh J."/>
            <person name="Banno F."/>
            <person name="Bowser L."/>
            <person name="Brooks S.Y."/>
            <person name="Carninci P."/>
            <person name="Chao Q."/>
            <person name="Choy N."/>
            <person name="Enju A."/>
            <person name="Goldsmith A.D."/>
            <person name="Gurjal M."/>
            <person name="Hansen N.F."/>
            <person name="Hayashizaki Y."/>
            <person name="Johnson-Hopson C."/>
            <person name="Hsuan V.W."/>
            <person name="Iida K."/>
            <person name="Karnes M."/>
            <person name="Khan S."/>
            <person name="Koesema E."/>
            <person name="Ishida J."/>
            <person name="Jiang P.X."/>
            <person name="Jones T."/>
            <person name="Kawai J."/>
            <person name="Kamiya A."/>
            <person name="Meyers C."/>
            <person name="Nakajima M."/>
            <person name="Narusaka M."/>
            <person name="Seki M."/>
            <person name="Sakurai T."/>
            <person name="Satou M."/>
            <person name="Tamse R."/>
            <person name="Vaysberg M."/>
            <person name="Wallender E.K."/>
            <person name="Wong C."/>
            <person name="Yamamura Y."/>
            <person name="Yuan S."/>
            <person name="Shinozaki K."/>
            <person name="Davis R.W."/>
            <person name="Theologis A."/>
            <person name="Ecker J.R."/>
        </authorList>
    </citation>
    <scope>NUCLEOTIDE SEQUENCE [LARGE SCALE MRNA]</scope>
    <source>
        <strain>cv. Columbia</strain>
    </source>
</reference>
<reference key="4">
    <citation type="submission" date="2006-07" db="EMBL/GenBank/DDBJ databases">
        <title>Large-scale analysis of RIKEN Arabidopsis full-length (RAFL) cDNAs.</title>
        <authorList>
            <person name="Totoki Y."/>
            <person name="Seki M."/>
            <person name="Ishida J."/>
            <person name="Nakajima M."/>
            <person name="Enju A."/>
            <person name="Kamiya A."/>
            <person name="Narusaka M."/>
            <person name="Shin-i T."/>
            <person name="Nakagawa M."/>
            <person name="Sakamoto N."/>
            <person name="Oishi K."/>
            <person name="Kohara Y."/>
            <person name="Kobayashi M."/>
            <person name="Toyoda A."/>
            <person name="Sakaki Y."/>
            <person name="Sakurai T."/>
            <person name="Iida K."/>
            <person name="Akiyama K."/>
            <person name="Satou M."/>
            <person name="Toyoda T."/>
            <person name="Konagaya A."/>
            <person name="Carninci P."/>
            <person name="Kawai J."/>
            <person name="Hayashizaki Y."/>
            <person name="Shinozaki K."/>
        </authorList>
    </citation>
    <scope>NUCLEOTIDE SEQUENCE [LARGE SCALE MRNA]</scope>
    <source>
        <strain>cv. Columbia</strain>
    </source>
</reference>
<reference key="5">
    <citation type="journal article" date="2009" name="DNA Res.">
        <title>Analysis of multiple occurrences of alternative splicing events in Arabidopsis thaliana using novel sequenced full-length cDNAs.</title>
        <authorList>
            <person name="Iida K."/>
            <person name="Fukami-Kobayashi K."/>
            <person name="Toyoda A."/>
            <person name="Sakaki Y."/>
            <person name="Kobayashi M."/>
            <person name="Seki M."/>
            <person name="Shinozaki K."/>
        </authorList>
    </citation>
    <scope>NUCLEOTIDE SEQUENCE [LARGE SCALE MRNA]</scope>
    <source>
        <strain>cv. Columbia</strain>
    </source>
</reference>
<reference key="6">
    <citation type="journal article" date="2001" name="Physiol. Plantarum">
        <title>Dark-inducible genes from Arabidopsis thaliana are associated with leaf senescence and repressed by sugars.</title>
        <authorList>
            <person name="Fujiki Y."/>
            <person name="Yoshikawa Y."/>
            <person name="Sato T."/>
            <person name="Inada N."/>
            <person name="Ito M."/>
            <person name="Nishida I."/>
            <person name="Watanabe A."/>
        </authorList>
    </citation>
    <scope>INDUCTION BY DARK AND SUCROSE</scope>
    <scope>DEVELOPMENTAL STAGE</scope>
</reference>
<reference key="7">
    <citation type="journal article" date="2008" name="Plant Physiol.">
        <title>Galactinol and raffinose constitute a novel function to protect plants from oxidative damage.</title>
        <authorList>
            <person name="Nishizawa A."/>
            <person name="Yabuta Y."/>
            <person name="Shigeoka S."/>
        </authorList>
    </citation>
    <scope>INDUCTION BY OXIDATIVE STRESS</scope>
    <scope>GENE FAMILY</scope>
    <scope>NOMENCLATURE</scope>
</reference>
<accession>Q8RX87</accession>
<accession>B9DFC4</accession>
<accession>B9DGW6</accession>
<accession>Q56X69</accession>
<dbReference type="EC" id="2.4.1.82"/>
<dbReference type="EMBL" id="AF296825">
    <property type="status" value="NOT_ANNOTATED_CDS"/>
    <property type="molecule type" value="Genomic_DNA"/>
</dbReference>
<dbReference type="EMBL" id="CP002688">
    <property type="protein sequence ID" value="AED92818.1"/>
    <property type="molecule type" value="Genomic_DNA"/>
</dbReference>
<dbReference type="EMBL" id="CP002688">
    <property type="protein sequence ID" value="AED92819.1"/>
    <property type="molecule type" value="Genomic_DNA"/>
</dbReference>
<dbReference type="EMBL" id="CP002688">
    <property type="protein sequence ID" value="AED92820.1"/>
    <property type="molecule type" value="Genomic_DNA"/>
</dbReference>
<dbReference type="EMBL" id="AY090237">
    <property type="protein sequence ID" value="AAL90901.1"/>
    <property type="status" value="ALT_INIT"/>
    <property type="molecule type" value="mRNA"/>
</dbReference>
<dbReference type="EMBL" id="BT000632">
    <property type="protein sequence ID" value="AAN18198.1"/>
    <property type="status" value="ALT_INIT"/>
    <property type="molecule type" value="mRNA"/>
</dbReference>
<dbReference type="EMBL" id="AK227214">
    <property type="protein sequence ID" value="BAE99252.1"/>
    <property type="status" value="ALT_INIT"/>
    <property type="molecule type" value="mRNA"/>
</dbReference>
<dbReference type="EMBL" id="AK221808">
    <property type="protein sequence ID" value="BAD93984.1"/>
    <property type="molecule type" value="mRNA"/>
</dbReference>
<dbReference type="EMBL" id="AK316714">
    <property type="protein sequence ID" value="BAH19441.1"/>
    <property type="molecule type" value="mRNA"/>
</dbReference>
<dbReference type="EMBL" id="AK317307">
    <property type="protein sequence ID" value="BAH19983.1"/>
    <property type="molecule type" value="mRNA"/>
</dbReference>
<dbReference type="EMBL" id="AK318923">
    <property type="protein sequence ID" value="BAH57038.1"/>
    <property type="molecule type" value="mRNA"/>
</dbReference>
<dbReference type="RefSeq" id="NP_001031910.1">
    <molecule id="Q8RX87-1"/>
    <property type="nucleotide sequence ID" value="NM_001036833.2"/>
</dbReference>
<dbReference type="RefSeq" id="NP_001190347.1">
    <property type="nucleotide sequence ID" value="NM_001203418.1"/>
</dbReference>
<dbReference type="RefSeq" id="NP_197525.1">
    <molecule id="Q8RX87-1"/>
    <property type="nucleotide sequence ID" value="NM_122032.6"/>
</dbReference>
<dbReference type="RefSeq" id="NP_851044.2">
    <molecule id="Q8RX87-1"/>
    <property type="nucleotide sequence ID" value="NM_180713.4"/>
</dbReference>
<dbReference type="PDB" id="7EXF">
    <property type="method" value="X-ray"/>
    <property type="resolution" value="2.17 A"/>
    <property type="chains" value="A/B=1-749"/>
</dbReference>
<dbReference type="PDB" id="7EXG">
    <property type="method" value="X-ray"/>
    <property type="resolution" value="2.05 A"/>
    <property type="chains" value="A/B=1-749"/>
</dbReference>
<dbReference type="PDB" id="7EXH">
    <property type="method" value="X-ray"/>
    <property type="resolution" value="2.63 A"/>
    <property type="chains" value="A/B=1-749"/>
</dbReference>
<dbReference type="PDB" id="7EXJ">
    <property type="method" value="X-ray"/>
    <property type="resolution" value="2.47 A"/>
    <property type="chains" value="A/B=1-749"/>
</dbReference>
<dbReference type="PDB" id="7EXQ">
    <property type="method" value="X-ray"/>
    <property type="resolution" value="2.20 A"/>
    <property type="chains" value="A/B=1-749"/>
</dbReference>
<dbReference type="PDB" id="7EXR">
    <property type="method" value="X-ray"/>
    <property type="resolution" value="2.00 A"/>
    <property type="chains" value="A/B=1-749"/>
</dbReference>
<dbReference type="PDBsum" id="7EXF"/>
<dbReference type="PDBsum" id="7EXG"/>
<dbReference type="PDBsum" id="7EXH"/>
<dbReference type="PDBsum" id="7EXJ"/>
<dbReference type="PDBsum" id="7EXQ"/>
<dbReference type="PDBsum" id="7EXR"/>
<dbReference type="SMR" id="Q8RX87"/>
<dbReference type="BioGRID" id="17423">
    <property type="interactions" value="3"/>
</dbReference>
<dbReference type="FunCoup" id="Q8RX87">
    <property type="interactions" value="67"/>
</dbReference>
<dbReference type="IntAct" id="Q8RX87">
    <property type="interactions" value="2"/>
</dbReference>
<dbReference type="STRING" id="3702.Q8RX87"/>
<dbReference type="CAZy" id="GH36">
    <property type="family name" value="Glycoside Hydrolase Family 36"/>
</dbReference>
<dbReference type="GlyGen" id="Q8RX87">
    <property type="glycosylation" value="1 site"/>
</dbReference>
<dbReference type="iPTMnet" id="Q8RX87"/>
<dbReference type="PaxDb" id="3702-AT5G20250.4"/>
<dbReference type="ProteomicsDB" id="236898">
    <molecule id="Q8RX87-1"/>
</dbReference>
<dbReference type="EnsemblPlants" id="AT5G20250.1">
    <molecule id="Q8RX87-1"/>
    <property type="protein sequence ID" value="AT5G20250.1"/>
    <property type="gene ID" value="AT5G20250"/>
</dbReference>
<dbReference type="EnsemblPlants" id="AT5G20250.2">
    <molecule id="Q8RX87-1"/>
    <property type="protein sequence ID" value="AT5G20250.2"/>
    <property type="gene ID" value="AT5G20250"/>
</dbReference>
<dbReference type="EnsemblPlants" id="AT5G20250.3">
    <molecule id="Q8RX87-1"/>
    <property type="protein sequence ID" value="AT5G20250.3"/>
    <property type="gene ID" value="AT5G20250"/>
</dbReference>
<dbReference type="GeneID" id="832147"/>
<dbReference type="Gramene" id="AT5G20250.1">
    <molecule id="Q8RX87-1"/>
    <property type="protein sequence ID" value="AT5G20250.1"/>
    <property type="gene ID" value="AT5G20250"/>
</dbReference>
<dbReference type="Gramene" id="AT5G20250.2">
    <molecule id="Q8RX87-1"/>
    <property type="protein sequence ID" value="AT5G20250.2"/>
    <property type="gene ID" value="AT5G20250"/>
</dbReference>
<dbReference type="Gramene" id="AT5G20250.3">
    <molecule id="Q8RX87-1"/>
    <property type="protein sequence ID" value="AT5G20250.3"/>
    <property type="gene ID" value="AT5G20250"/>
</dbReference>
<dbReference type="KEGG" id="ath:AT5G20250"/>
<dbReference type="Araport" id="AT5G20250"/>
<dbReference type="TAIR" id="AT5G20250">
    <property type="gene designation" value="DIN10"/>
</dbReference>
<dbReference type="eggNOG" id="ENOG502QPVE">
    <property type="taxonomic scope" value="Eukaryota"/>
</dbReference>
<dbReference type="HOGENOM" id="CLU_007066_0_0_1"/>
<dbReference type="InParanoid" id="Q8RX87"/>
<dbReference type="OMA" id="TDHQNPD"/>
<dbReference type="PhylomeDB" id="Q8RX87"/>
<dbReference type="BioCyc" id="ARA:AT5G20250-MONOMER"/>
<dbReference type="BRENDA" id="2.4.1.82">
    <property type="organism ID" value="399"/>
</dbReference>
<dbReference type="PRO" id="PR:Q8RX87"/>
<dbReference type="Proteomes" id="UP000006548">
    <property type="component" value="Chromosome 5"/>
</dbReference>
<dbReference type="ExpressionAtlas" id="Q8RX87">
    <property type="expression patterns" value="baseline and differential"/>
</dbReference>
<dbReference type="GO" id="GO:0047274">
    <property type="term" value="F:galactinol-sucrose galactosyltransferase activity"/>
    <property type="evidence" value="ECO:0007669"/>
    <property type="project" value="UniProtKB-EC"/>
</dbReference>
<dbReference type="FunFam" id="3.20.20.70:FF:000129">
    <property type="entry name" value="Probable galactinol--sucrose galactosyltransferase 1"/>
    <property type="match status" value="1"/>
</dbReference>
<dbReference type="Gene3D" id="3.20.20.70">
    <property type="entry name" value="Aldolase class I"/>
    <property type="match status" value="1"/>
</dbReference>
<dbReference type="InterPro" id="IPR013785">
    <property type="entry name" value="Aldolase_TIM"/>
</dbReference>
<dbReference type="InterPro" id="IPR017853">
    <property type="entry name" value="Glycoside_hydrolase_SF"/>
</dbReference>
<dbReference type="InterPro" id="IPR008811">
    <property type="entry name" value="Glycosyl_hydrolases_36"/>
</dbReference>
<dbReference type="PANTHER" id="PTHR31268">
    <property type="match status" value="1"/>
</dbReference>
<dbReference type="PANTHER" id="PTHR31268:SF5">
    <property type="entry name" value="GALACTINOL--SUCROSE GALACTOSYLTRANSFERASE 6-RELATED"/>
    <property type="match status" value="1"/>
</dbReference>
<dbReference type="Pfam" id="PF05691">
    <property type="entry name" value="Raffinose_syn"/>
    <property type="match status" value="1"/>
</dbReference>
<dbReference type="SUPFAM" id="SSF51445">
    <property type="entry name" value="(Trans)glycosidases"/>
    <property type="match status" value="1"/>
</dbReference>